<sequence length="391" mass="40738">MSIVRMTDLDLSGKRVLIRQDLNVPIDNGQITSEQRITASVPTIKLALEKGAAVMVTSHLGRPKEGTWSEEDSLAPVAARLTTLLGLDVPLVRDWVDGVDVAPGQVVLLENCRMNVGEGKDDEALARKYAALCDVFVMDAFGTAHRAQASTHGVIRFAPVAAGGPLLMAELDALAKALDNPAKPLLAIVAGSKVSTKLELLSNLVNKVDQLIVGGGIANTFIAAAGHDVGKSLSEPDLIPTANQIVADAKARGAEIPLPTDVVVAKQFLPDAEASVKSLDQVDADDLILDIGPQTAAHYAELIANAGTVVWNGPVGVFEFEPFSHGTETLARAIAASKAFSIAGGGDTLAAVDKYAIAKDVTYISTGGGAFLEFLEGKTLPAVAALEARGQ</sequence>
<evidence type="ECO:0000255" key="1">
    <source>
        <dbReference type="HAMAP-Rule" id="MF_00145"/>
    </source>
</evidence>
<gene>
    <name evidence="1" type="primary">pgk</name>
    <name type="ordered locus">XCC3188</name>
</gene>
<accession>Q8P5Z4</accession>
<proteinExistence type="inferred from homology"/>
<name>PGK_XANCP</name>
<keyword id="KW-0067">ATP-binding</keyword>
<keyword id="KW-0963">Cytoplasm</keyword>
<keyword id="KW-0324">Glycolysis</keyword>
<keyword id="KW-0418">Kinase</keyword>
<keyword id="KW-0547">Nucleotide-binding</keyword>
<keyword id="KW-1185">Reference proteome</keyword>
<keyword id="KW-0808">Transferase</keyword>
<dbReference type="EC" id="2.7.2.3" evidence="1"/>
<dbReference type="EMBL" id="AE008922">
    <property type="protein sequence ID" value="AAM42458.1"/>
    <property type="molecule type" value="Genomic_DNA"/>
</dbReference>
<dbReference type="RefSeq" id="NP_638534.1">
    <property type="nucleotide sequence ID" value="NC_003902.1"/>
</dbReference>
<dbReference type="RefSeq" id="WP_011038295.1">
    <property type="nucleotide sequence ID" value="NC_003902.1"/>
</dbReference>
<dbReference type="SMR" id="Q8P5Z4"/>
<dbReference type="STRING" id="190485.XCC3188"/>
<dbReference type="EnsemblBacteria" id="AAM42458">
    <property type="protein sequence ID" value="AAM42458"/>
    <property type="gene ID" value="XCC3188"/>
</dbReference>
<dbReference type="KEGG" id="xcc:XCC3188"/>
<dbReference type="PATRIC" id="fig|190485.4.peg.3406"/>
<dbReference type="eggNOG" id="COG0126">
    <property type="taxonomic scope" value="Bacteria"/>
</dbReference>
<dbReference type="HOGENOM" id="CLU_025427_0_2_6"/>
<dbReference type="OrthoDB" id="9808460at2"/>
<dbReference type="UniPathway" id="UPA00109">
    <property type="reaction ID" value="UER00185"/>
</dbReference>
<dbReference type="Proteomes" id="UP000001010">
    <property type="component" value="Chromosome"/>
</dbReference>
<dbReference type="GO" id="GO:0005829">
    <property type="term" value="C:cytosol"/>
    <property type="evidence" value="ECO:0000318"/>
    <property type="project" value="GO_Central"/>
</dbReference>
<dbReference type="GO" id="GO:0043531">
    <property type="term" value="F:ADP binding"/>
    <property type="evidence" value="ECO:0000318"/>
    <property type="project" value="GO_Central"/>
</dbReference>
<dbReference type="GO" id="GO:0005524">
    <property type="term" value="F:ATP binding"/>
    <property type="evidence" value="ECO:0000318"/>
    <property type="project" value="GO_Central"/>
</dbReference>
<dbReference type="GO" id="GO:0004618">
    <property type="term" value="F:phosphoglycerate kinase activity"/>
    <property type="evidence" value="ECO:0000318"/>
    <property type="project" value="GO_Central"/>
</dbReference>
<dbReference type="GO" id="GO:0006094">
    <property type="term" value="P:gluconeogenesis"/>
    <property type="evidence" value="ECO:0000318"/>
    <property type="project" value="GO_Central"/>
</dbReference>
<dbReference type="GO" id="GO:0006096">
    <property type="term" value="P:glycolytic process"/>
    <property type="evidence" value="ECO:0000318"/>
    <property type="project" value="GO_Central"/>
</dbReference>
<dbReference type="FunFam" id="3.40.50.1260:FF:000001">
    <property type="entry name" value="Phosphoglycerate kinase"/>
    <property type="match status" value="1"/>
</dbReference>
<dbReference type="FunFam" id="3.40.50.1260:FF:000002">
    <property type="entry name" value="Phosphoglycerate kinase"/>
    <property type="match status" value="1"/>
</dbReference>
<dbReference type="Gene3D" id="3.40.50.1260">
    <property type="entry name" value="Phosphoglycerate kinase, N-terminal domain"/>
    <property type="match status" value="2"/>
</dbReference>
<dbReference type="HAMAP" id="MF_00145">
    <property type="entry name" value="Phosphoglyc_kinase"/>
    <property type="match status" value="1"/>
</dbReference>
<dbReference type="InterPro" id="IPR001576">
    <property type="entry name" value="Phosphoglycerate_kinase"/>
</dbReference>
<dbReference type="InterPro" id="IPR015911">
    <property type="entry name" value="Phosphoglycerate_kinase_CS"/>
</dbReference>
<dbReference type="InterPro" id="IPR015824">
    <property type="entry name" value="Phosphoglycerate_kinase_N"/>
</dbReference>
<dbReference type="InterPro" id="IPR036043">
    <property type="entry name" value="Phosphoglycerate_kinase_sf"/>
</dbReference>
<dbReference type="PANTHER" id="PTHR11406">
    <property type="entry name" value="PHOSPHOGLYCERATE KINASE"/>
    <property type="match status" value="1"/>
</dbReference>
<dbReference type="PANTHER" id="PTHR11406:SF23">
    <property type="entry name" value="PHOSPHOGLYCERATE KINASE 1, CHLOROPLASTIC-RELATED"/>
    <property type="match status" value="1"/>
</dbReference>
<dbReference type="Pfam" id="PF00162">
    <property type="entry name" value="PGK"/>
    <property type="match status" value="1"/>
</dbReference>
<dbReference type="PIRSF" id="PIRSF000724">
    <property type="entry name" value="Pgk"/>
    <property type="match status" value="1"/>
</dbReference>
<dbReference type="PRINTS" id="PR00477">
    <property type="entry name" value="PHGLYCKINASE"/>
</dbReference>
<dbReference type="SUPFAM" id="SSF53748">
    <property type="entry name" value="Phosphoglycerate kinase"/>
    <property type="match status" value="1"/>
</dbReference>
<dbReference type="PROSITE" id="PS00111">
    <property type="entry name" value="PGLYCERATE_KINASE"/>
    <property type="match status" value="1"/>
</dbReference>
<organism>
    <name type="scientific">Xanthomonas campestris pv. campestris (strain ATCC 33913 / DSM 3586 / NCPPB 528 / LMG 568 / P 25)</name>
    <dbReference type="NCBI Taxonomy" id="190485"/>
    <lineage>
        <taxon>Bacteria</taxon>
        <taxon>Pseudomonadati</taxon>
        <taxon>Pseudomonadota</taxon>
        <taxon>Gammaproteobacteria</taxon>
        <taxon>Lysobacterales</taxon>
        <taxon>Lysobacteraceae</taxon>
        <taxon>Xanthomonas</taxon>
    </lineage>
</organism>
<protein>
    <recommendedName>
        <fullName evidence="1">Phosphoglycerate kinase</fullName>
        <ecNumber evidence="1">2.7.2.3</ecNumber>
    </recommendedName>
</protein>
<reference key="1">
    <citation type="journal article" date="2002" name="Nature">
        <title>Comparison of the genomes of two Xanthomonas pathogens with differing host specificities.</title>
        <authorList>
            <person name="da Silva A.C.R."/>
            <person name="Ferro J.A."/>
            <person name="Reinach F.C."/>
            <person name="Farah C.S."/>
            <person name="Furlan L.R."/>
            <person name="Quaggio R.B."/>
            <person name="Monteiro-Vitorello C.B."/>
            <person name="Van Sluys M.A."/>
            <person name="Almeida N.F. Jr."/>
            <person name="Alves L.M.C."/>
            <person name="do Amaral A.M."/>
            <person name="Bertolini M.C."/>
            <person name="Camargo L.E.A."/>
            <person name="Camarotte G."/>
            <person name="Cannavan F."/>
            <person name="Cardozo J."/>
            <person name="Chambergo F."/>
            <person name="Ciapina L.P."/>
            <person name="Cicarelli R.M.B."/>
            <person name="Coutinho L.L."/>
            <person name="Cursino-Santos J.R."/>
            <person name="El-Dorry H."/>
            <person name="Faria J.B."/>
            <person name="Ferreira A.J.S."/>
            <person name="Ferreira R.C.C."/>
            <person name="Ferro M.I.T."/>
            <person name="Formighieri E.F."/>
            <person name="Franco M.C."/>
            <person name="Greggio C.C."/>
            <person name="Gruber A."/>
            <person name="Katsuyama A.M."/>
            <person name="Kishi L.T."/>
            <person name="Leite R.P."/>
            <person name="Lemos E.G.M."/>
            <person name="Lemos M.V.F."/>
            <person name="Locali E.C."/>
            <person name="Machado M.A."/>
            <person name="Madeira A.M.B.N."/>
            <person name="Martinez-Rossi N.M."/>
            <person name="Martins E.C."/>
            <person name="Meidanis J."/>
            <person name="Menck C.F.M."/>
            <person name="Miyaki C.Y."/>
            <person name="Moon D.H."/>
            <person name="Moreira L.M."/>
            <person name="Novo M.T.M."/>
            <person name="Okura V.K."/>
            <person name="Oliveira M.C."/>
            <person name="Oliveira V.R."/>
            <person name="Pereira H.A."/>
            <person name="Rossi A."/>
            <person name="Sena J.A.D."/>
            <person name="Silva C."/>
            <person name="de Souza R.F."/>
            <person name="Spinola L.A.F."/>
            <person name="Takita M.A."/>
            <person name="Tamura R.E."/>
            <person name="Teixeira E.C."/>
            <person name="Tezza R.I.D."/>
            <person name="Trindade dos Santos M."/>
            <person name="Truffi D."/>
            <person name="Tsai S.M."/>
            <person name="White F.F."/>
            <person name="Setubal J.C."/>
            <person name="Kitajima J.P."/>
        </authorList>
    </citation>
    <scope>NUCLEOTIDE SEQUENCE [LARGE SCALE GENOMIC DNA]</scope>
    <source>
        <strain>ATCC 33913 / DSM 3586 / NCPPB 528 / LMG 568 / P 25</strain>
    </source>
</reference>
<feature type="chain" id="PRO_0000146045" description="Phosphoglycerate kinase">
    <location>
        <begin position="1"/>
        <end position="391"/>
    </location>
</feature>
<feature type="binding site" evidence="1">
    <location>
        <begin position="21"/>
        <end position="23"/>
    </location>
    <ligand>
        <name>substrate</name>
    </ligand>
</feature>
<feature type="binding site" evidence="1">
    <location>
        <position position="36"/>
    </location>
    <ligand>
        <name>substrate</name>
    </ligand>
</feature>
<feature type="binding site" evidence="1">
    <location>
        <begin position="59"/>
        <end position="62"/>
    </location>
    <ligand>
        <name>substrate</name>
    </ligand>
</feature>
<feature type="binding site" evidence="1">
    <location>
        <position position="113"/>
    </location>
    <ligand>
        <name>substrate</name>
    </ligand>
</feature>
<feature type="binding site" evidence="1">
    <location>
        <position position="146"/>
    </location>
    <ligand>
        <name>substrate</name>
    </ligand>
</feature>
<feature type="binding site" evidence="1">
    <location>
        <position position="197"/>
    </location>
    <ligand>
        <name>ATP</name>
        <dbReference type="ChEBI" id="CHEBI:30616"/>
    </ligand>
</feature>
<feature type="binding site" evidence="1">
    <location>
        <position position="319"/>
    </location>
    <ligand>
        <name>ATP</name>
        <dbReference type="ChEBI" id="CHEBI:30616"/>
    </ligand>
</feature>
<feature type="binding site" evidence="1">
    <location>
        <begin position="345"/>
        <end position="348"/>
    </location>
    <ligand>
        <name>ATP</name>
        <dbReference type="ChEBI" id="CHEBI:30616"/>
    </ligand>
</feature>
<comment type="catalytic activity">
    <reaction evidence="1">
        <text>(2R)-3-phosphoglycerate + ATP = (2R)-3-phospho-glyceroyl phosphate + ADP</text>
        <dbReference type="Rhea" id="RHEA:14801"/>
        <dbReference type="ChEBI" id="CHEBI:30616"/>
        <dbReference type="ChEBI" id="CHEBI:57604"/>
        <dbReference type="ChEBI" id="CHEBI:58272"/>
        <dbReference type="ChEBI" id="CHEBI:456216"/>
        <dbReference type="EC" id="2.7.2.3"/>
    </reaction>
</comment>
<comment type="pathway">
    <text evidence="1">Carbohydrate degradation; glycolysis; pyruvate from D-glyceraldehyde 3-phosphate: step 2/5.</text>
</comment>
<comment type="subunit">
    <text evidence="1">Monomer.</text>
</comment>
<comment type="subcellular location">
    <subcellularLocation>
        <location evidence="1">Cytoplasm</location>
    </subcellularLocation>
</comment>
<comment type="similarity">
    <text evidence="1">Belongs to the phosphoglycerate kinase family.</text>
</comment>